<proteinExistence type="evidence at protein level"/>
<evidence type="ECO:0000255" key="1">
    <source>
        <dbReference type="HAMAP-Rule" id="MF_04132"/>
    </source>
</evidence>
<evidence type="ECO:0000269" key="2">
    <source>
    </source>
</evidence>
<evidence type="ECO:0000269" key="3">
    <source>
    </source>
</evidence>
<evidence type="ECO:0000269" key="4">
    <source>
    </source>
</evidence>
<evidence type="ECO:0000269" key="5">
    <source>
    </source>
</evidence>
<evidence type="ECO:0000269" key="6">
    <source>
    </source>
</evidence>
<evidence type="ECO:0000269" key="7">
    <source>
    </source>
</evidence>
<evidence type="ECO:0000269" key="8">
    <source>
    </source>
</evidence>
<evidence type="ECO:0000269" key="9">
    <source>
    </source>
</evidence>
<evidence type="ECO:0000269" key="10">
    <source>
    </source>
</evidence>
<evidence type="ECO:0000269" key="11">
    <source>
    </source>
</evidence>
<evidence type="ECO:0000269" key="12">
    <source>
    </source>
</evidence>
<evidence type="ECO:0000269" key="13">
    <source>
    </source>
</evidence>
<evidence type="ECO:0000269" key="14">
    <source>
    </source>
</evidence>
<evidence type="ECO:0000269" key="15">
    <source>
    </source>
</evidence>
<evidence type="ECO:0000269" key="16">
    <source>
    </source>
</evidence>
<evidence type="ECO:0000269" key="17">
    <source>
    </source>
</evidence>
<evidence type="ECO:0000269" key="18">
    <source>
    </source>
</evidence>
<evidence type="ECO:0000269" key="19">
    <source>
    </source>
</evidence>
<evidence type="ECO:0000269" key="20">
    <source>
    </source>
</evidence>
<evidence type="ECO:0000303" key="21">
    <source>
    </source>
</evidence>
<evidence type="ECO:0000303" key="22">
    <source>
    </source>
</evidence>
<evidence type="ECO:0000305" key="23"/>
<evidence type="ECO:0007744" key="24">
    <source>
        <dbReference type="PDB" id="2B4H"/>
    </source>
</evidence>
<evidence type="ECO:0007744" key="25">
    <source>
        <dbReference type="PDB" id="2B4I"/>
    </source>
</evidence>
<evidence type="ECO:0007744" key="26">
    <source>
        <dbReference type="PDB" id="2P3I"/>
    </source>
</evidence>
<evidence type="ECO:0007744" key="27">
    <source>
        <dbReference type="PDB" id="2P3J"/>
    </source>
</evidence>
<evidence type="ECO:0007744" key="28">
    <source>
        <dbReference type="PDB" id="2P3K"/>
    </source>
</evidence>
<evidence type="ECO:0007744" key="29">
    <source>
        <dbReference type="PDB" id="3TB0"/>
    </source>
</evidence>
<evidence type="ECO:0007829" key="30">
    <source>
        <dbReference type="PDB" id="1KQR"/>
    </source>
</evidence>
<evidence type="ECO:0007829" key="31">
    <source>
        <dbReference type="PDB" id="1SLQ"/>
    </source>
</evidence>
<evidence type="ECO:0007829" key="32">
    <source>
        <dbReference type="PDB" id="2B4I"/>
    </source>
</evidence>
<name>VP4_ROTRH</name>
<keyword id="KW-0002">3D-structure</keyword>
<keyword id="KW-0167">Capsid protein</keyword>
<keyword id="KW-0175">Coiled coil</keyword>
<keyword id="KW-1015">Disulfide bond</keyword>
<keyword id="KW-0348">Hemagglutinin</keyword>
<keyword id="KW-1032">Host cell membrane</keyword>
<keyword id="KW-1035">Host cytoplasm</keyword>
<keyword id="KW-1037">Host cytoskeleton</keyword>
<keyword id="KW-1038">Host endoplasmic reticulum</keyword>
<keyword id="KW-1043">Host membrane</keyword>
<keyword id="KW-0945">Host-virus interaction</keyword>
<keyword id="KW-0472">Membrane</keyword>
<keyword id="KW-1152">Outer capsid protein</keyword>
<keyword id="KW-1161">Viral attachment to host cell</keyword>
<keyword id="KW-1162">Viral penetration into host cytoplasm</keyword>
<keyword id="KW-1173">Viral penetration via permeabilization of host membrane</keyword>
<keyword id="KW-0946">Virion</keyword>
<keyword id="KW-1160">Virus entry into host cell</keyword>
<organism>
    <name type="scientific">Rotavirus A (strain RVA/Monkey/United States/RRV/1975/G3P5B[3])</name>
    <name type="common">RV-A</name>
    <dbReference type="NCBI Taxonomy" id="444185"/>
    <lineage>
        <taxon>Viruses</taxon>
        <taxon>Riboviria</taxon>
        <taxon>Orthornavirae</taxon>
        <taxon>Duplornaviricota</taxon>
        <taxon>Resentoviricetes</taxon>
        <taxon>Reovirales</taxon>
        <taxon>Sedoreoviridae</taxon>
        <taxon>Rotavirus</taxon>
        <taxon>Rotavirus A</taxon>
    </lineage>
</organism>
<dbReference type="EMBL" id="M18736">
    <property type="protein sequence ID" value="AAA47345.1"/>
    <property type="molecule type" value="Genomic_RNA"/>
</dbReference>
<dbReference type="EMBL" id="AY033150">
    <property type="protein sequence ID" value="AAK52093.1"/>
    <property type="molecule type" value="mRNA"/>
</dbReference>
<dbReference type="PIR" id="A31078">
    <property type="entry name" value="VPXRRH"/>
</dbReference>
<dbReference type="PIR" id="I25904">
    <property type="entry name" value="VPXRRR"/>
</dbReference>
<dbReference type="PDB" id="1KQR">
    <property type="method" value="X-ray"/>
    <property type="resolution" value="1.40 A"/>
    <property type="chains" value="A=62-224"/>
</dbReference>
<dbReference type="PDB" id="1KRI">
    <property type="method" value="NMR"/>
    <property type="chains" value="A=46-231"/>
</dbReference>
<dbReference type="PDB" id="1SLQ">
    <property type="method" value="X-ray"/>
    <property type="resolution" value="3.20 A"/>
    <property type="chains" value="A/B/C/D/E/F=248-525"/>
</dbReference>
<dbReference type="PDB" id="2B4H">
    <property type="method" value="X-ray"/>
    <property type="resolution" value="1.60 A"/>
    <property type="chains" value="A/B=248-479"/>
</dbReference>
<dbReference type="PDB" id="2B4I">
    <property type="method" value="X-ray"/>
    <property type="resolution" value="2.00 A"/>
    <property type="chains" value="A/B/C=248-479"/>
</dbReference>
<dbReference type="PDB" id="2P3I">
    <property type="method" value="X-ray"/>
    <property type="resolution" value="1.75 A"/>
    <property type="chains" value="A=64-224"/>
</dbReference>
<dbReference type="PDB" id="2P3J">
    <property type="method" value="X-ray"/>
    <property type="resolution" value="1.90 A"/>
    <property type="chains" value="A=64-224"/>
</dbReference>
<dbReference type="PDB" id="2P3K">
    <property type="method" value="X-ray"/>
    <property type="resolution" value="1.56 A"/>
    <property type="chains" value="A=64-224"/>
</dbReference>
<dbReference type="PDB" id="3TB0">
    <property type="method" value="X-ray"/>
    <property type="resolution" value="2.00 A"/>
    <property type="chains" value="A=64-224"/>
</dbReference>
<dbReference type="PDB" id="8UK2">
    <property type="method" value="EM"/>
    <property type="resolution" value="8.00 A"/>
    <property type="chains" value="1/2/3=1-776"/>
</dbReference>
<dbReference type="PDB" id="8UK3">
    <property type="method" value="EM"/>
    <property type="resolution" value="8.00 A"/>
    <property type="chains" value="1/2/3=1-776"/>
</dbReference>
<dbReference type="PDBsum" id="1KQR"/>
<dbReference type="PDBsum" id="1KRI"/>
<dbReference type="PDBsum" id="1SLQ"/>
<dbReference type="PDBsum" id="2B4H"/>
<dbReference type="PDBsum" id="2B4I"/>
<dbReference type="PDBsum" id="2P3I"/>
<dbReference type="PDBsum" id="2P3J"/>
<dbReference type="PDBsum" id="2P3K"/>
<dbReference type="PDBsum" id="3TB0"/>
<dbReference type="PDBsum" id="8UK2"/>
<dbReference type="PDBsum" id="8UK3"/>
<dbReference type="BMRB" id="P12473"/>
<dbReference type="SMR" id="P12473"/>
<dbReference type="TCDB" id="1.G.19.1.1">
    <property type="family name" value="the rotavirus pore-forming membrane fusion complex (rotavirus mfc) family"/>
</dbReference>
<dbReference type="UniLectin" id="P12473"/>
<dbReference type="EvolutionaryTrace" id="P12473"/>
<dbReference type="GO" id="GO:0044172">
    <property type="term" value="C:host cell endoplasmic reticulum-Golgi intermediate compartment"/>
    <property type="evidence" value="ECO:0007669"/>
    <property type="project" value="UniProtKB-SubCell"/>
</dbReference>
<dbReference type="GO" id="GO:0020002">
    <property type="term" value="C:host cell plasma membrane"/>
    <property type="evidence" value="ECO:0007669"/>
    <property type="project" value="UniProtKB-SubCell"/>
</dbReference>
<dbReference type="GO" id="GO:0044168">
    <property type="term" value="C:host cell rough endoplasmic reticulum"/>
    <property type="evidence" value="ECO:0007669"/>
    <property type="project" value="UniProtKB-SubCell"/>
</dbReference>
<dbReference type="GO" id="GO:0044163">
    <property type="term" value="C:host cytoskeleton"/>
    <property type="evidence" value="ECO:0007669"/>
    <property type="project" value="UniProtKB-SubCell"/>
</dbReference>
<dbReference type="GO" id="GO:0016020">
    <property type="term" value="C:membrane"/>
    <property type="evidence" value="ECO:0007669"/>
    <property type="project" value="UniProtKB-KW"/>
</dbReference>
<dbReference type="GO" id="GO:0039624">
    <property type="term" value="C:viral outer capsid"/>
    <property type="evidence" value="ECO:0007669"/>
    <property type="project" value="UniProtKB-UniRule"/>
</dbReference>
<dbReference type="GO" id="GO:0039665">
    <property type="term" value="P:permeabilization of host organelle membrane involved in viral entry into host cell"/>
    <property type="evidence" value="ECO:0007669"/>
    <property type="project" value="UniProtKB-UniRule"/>
</dbReference>
<dbReference type="GO" id="GO:0019062">
    <property type="term" value="P:virion attachment to host cell"/>
    <property type="evidence" value="ECO:0007669"/>
    <property type="project" value="UniProtKB-UniRule"/>
</dbReference>
<dbReference type="Gene3D" id="1.20.5.170">
    <property type="match status" value="1"/>
</dbReference>
<dbReference type="Gene3D" id="2.60.120.200">
    <property type="match status" value="1"/>
</dbReference>
<dbReference type="HAMAP" id="MF_04132">
    <property type="entry name" value="Rota_A_VP4"/>
    <property type="match status" value="1"/>
</dbReference>
<dbReference type="HAMAP" id="MF_04125">
    <property type="entry name" value="Rota_VP4"/>
    <property type="match status" value="1"/>
</dbReference>
<dbReference type="InterPro" id="IPR013320">
    <property type="entry name" value="ConA-like_dom_sf"/>
</dbReference>
<dbReference type="InterPro" id="IPR042546">
    <property type="entry name" value="Rota_A_VP4"/>
</dbReference>
<dbReference type="InterPro" id="IPR035330">
    <property type="entry name" value="Rota_VP4_MID"/>
</dbReference>
<dbReference type="InterPro" id="IPR038017">
    <property type="entry name" value="Rota_VP4_MID_sf"/>
</dbReference>
<dbReference type="InterPro" id="IPR000416">
    <property type="entry name" value="VP4_concanavalin-like"/>
</dbReference>
<dbReference type="InterPro" id="IPR035329">
    <property type="entry name" value="VP4_helical"/>
</dbReference>
<dbReference type="Pfam" id="PF17477">
    <property type="entry name" value="Rota_VP4_MID"/>
    <property type="match status" value="1"/>
</dbReference>
<dbReference type="Pfam" id="PF00426">
    <property type="entry name" value="VP4_haemagglut"/>
    <property type="match status" value="1"/>
</dbReference>
<dbReference type="Pfam" id="PF17478">
    <property type="entry name" value="VP4_helical"/>
    <property type="match status" value="1"/>
</dbReference>
<dbReference type="SUPFAM" id="SSF49899">
    <property type="entry name" value="Concanavalin A-like lectins/glucanases"/>
    <property type="match status" value="1"/>
</dbReference>
<dbReference type="SUPFAM" id="SSF111379">
    <property type="entry name" value="VP4 membrane interaction domain"/>
    <property type="match status" value="1"/>
</dbReference>
<reference key="1">
    <citation type="journal article" date="1988" name="Proc. Natl. Acad. Sci. U.S.A.">
        <title>The rhesus rotavirus gene encoding protein VP3: location of amino acids involved in homologous and heterologous rotavirus neutralization and identification of a putative fusion region.</title>
        <authorList>
            <person name="Mackow E.R."/>
            <person name="Shaw R.D."/>
            <person name="Matsui S.M."/>
            <person name="Vo P.T."/>
            <person name="Dang M.-N."/>
            <person name="Greenberg H.G."/>
        </authorList>
    </citation>
    <scope>NUCLEOTIDE SEQUENCE [GENOMIC RNA]</scope>
</reference>
<reference key="2">
    <citation type="journal article" date="2001" name="J. Virol.">
        <title>Proteolysis of monomeric recombinant rotavirus VP4 yields an oligomeric VP5* core.</title>
        <authorList>
            <person name="Dormitzer P.R."/>
            <person name="Greenberg H.B."/>
            <person name="Harrison S.C."/>
        </authorList>
    </citation>
    <scope>NUCLEOTIDE SEQUENCE [MRNA]</scope>
</reference>
<reference key="3">
    <citation type="journal article" date="1986" name="Proc. Natl. Acad. Sci. U.S.A.">
        <title>Conservation of amino acid sequence of VP8 and cleavage region of 84-kDa outer capsid protein among rotaviruses recovered from asymptomatic neonatal infection.</title>
        <authorList>
            <person name="Gorziglia M."/>
            <person name="Hoshino Y."/>
            <person name="Buckler-White A."/>
            <person name="Blumentals I."/>
            <person name="Glass R."/>
            <person name="Flores J."/>
            <person name="Kapikian A.Z."/>
            <person name="Chanock R.M."/>
        </authorList>
    </citation>
    <scope>NUCLEOTIDE SEQUENCE [GENOMIC RNA] OF 1-281</scope>
    <source>
        <strain>Isolate MMU-18006</strain>
    </source>
</reference>
<reference key="4">
    <citation type="journal article" date="1993" name="J. Virol.">
        <title>Location of intrachain disulfide bonds in the VP5* and VP8* trypsin cleavage fragments of the rhesus rotavirus spike protein VP4.</title>
        <authorList>
            <person name="Patton J.T."/>
            <person name="Hua J.J."/>
            <person name="Mansell E.A."/>
        </authorList>
    </citation>
    <scope>DISULFIDE BONDS (OUTER CAPSID PROTEIN VP4)</scope>
</reference>
<reference key="5">
    <citation type="journal article" date="1996" name="J. Virol.">
        <title>Trypsin activation pathway of rotavirus infectivity.</title>
        <authorList>
            <person name="Arias C.F."/>
            <person name="Romero P."/>
            <person name="Alvarez V."/>
            <person name="Lopez S."/>
        </authorList>
    </citation>
    <scope>PROTEOLYTIC CLEAVAGE (OUTER CAPSID PROTEIN VP4)</scope>
</reference>
<reference key="6">
    <citation type="journal article" date="1998" name="J. Virol.">
        <title>Cleavage of rhesus rotavirus VP4 after arginine 247 is essential for rotavirus-like particle-induced fusion from without.</title>
        <authorList>
            <person name="Gilbert J.M."/>
            <person name="Greenberg H.B."/>
        </authorList>
    </citation>
    <scope>PROTEOLYTIC CLEAVAGE (OUTER CAPSID PROTEIN VP4)</scope>
    <scope>MUTAGENESIS OF ARG-231; ARG-241 AND ARG-247</scope>
</reference>
<reference key="7">
    <citation type="journal article" date="2000" name="Virology">
        <title>Integrin alpha2beta1 mediates the cell attachment of the rotavirus neuraminidase-resistant variant nar3.</title>
        <authorList>
            <person name="Zarate S."/>
            <person name="Espinosa R."/>
            <person name="Romero P."/>
            <person name="Guerrero C.A."/>
            <person name="Arias C.F."/>
            <person name="Lopez S."/>
        </authorList>
    </citation>
    <scope>INTERACTION WITH INTEGRIN HETERODIMER ITGA2/ITGB1 (OUTER CAPSID PROTEIN VP5*)</scope>
    <source>
        <strain>nar3</strain>
        <strain>RRV</strain>
    </source>
</reference>
<reference key="8">
    <citation type="journal article" date="2000" name="J. Virol.">
        <title>Rotavirus spike protein VP4 is present at the plasma membrane and is associated with microtubules in infected cells.</title>
        <authorList>
            <person name="Nejmeddine M."/>
            <person name="Trugnan G."/>
            <person name="Sapin C."/>
            <person name="Kohli E."/>
            <person name="Svensson L."/>
            <person name="Lopez S."/>
            <person name="Cohen J."/>
        </authorList>
    </citation>
    <scope>SUBCELLULAR LOCATION (OUTER CAPSID PROTEIN VP4)</scope>
</reference>
<reference key="9">
    <citation type="journal article" date="2002" name="J. Virol.">
        <title>Initial interaction of rotavirus strains with N-acetylneuraminic (sialic) acid residues on the cell surface correlates with VP4 genotype, not species of origin.</title>
        <authorList>
            <person name="Ciarlet M."/>
            <person name="Ludert J.E."/>
            <person name="Iturriza-Gomara M."/>
            <person name="Liprandi F."/>
            <person name="Gray J.J."/>
            <person name="Desselberger U."/>
            <person name="Estes M.K."/>
        </authorList>
    </citation>
    <scope>SIALIC ACID DEPENDENCY</scope>
</reference>
<reference key="10">
    <citation type="journal article" date="2003" name="J. Virol.">
        <title>Interaction of rotaviruses with Hsc70 during cell entry is mediated by VP5.</title>
        <authorList>
            <person name="Zarate S."/>
            <person name="Cuadras M.A."/>
            <person name="Espinosa R."/>
            <person name="Romero P."/>
            <person name="Juarez K.O."/>
            <person name="Camacho-Nuez M."/>
            <person name="Arias C.F."/>
            <person name="Lopez S."/>
        </authorList>
    </citation>
    <scope>INTERACTION WITH HSPA8/HSP70 (OUTER CAPSID PROTEIN VP5*)</scope>
</reference>
<reference key="11">
    <citation type="journal article" date="2004" name="Trends Microbiol.">
        <title>Multistep entry of rotavirus into cells: a Versaillesque dance.</title>
        <authorList>
            <person name="Lopez S."/>
            <person name="Arias C.F."/>
        </authorList>
    </citation>
    <scope>REVIEW</scope>
</reference>
<reference key="12">
    <citation type="journal article" date="2005" name="J. Gen. Virol.">
        <title>Rotaviruses interact with alpha4beta7 and alpha4beta1 integrins by binding the same integrin domains as natural ligands.</title>
        <authorList>
            <person name="Graham K.L."/>
            <person name="Fleming F.E."/>
            <person name="Halasz P."/>
            <person name="Hewish M.J."/>
            <person name="Nagesha H.S."/>
            <person name="Holmes I.H."/>
            <person name="Takada Y."/>
            <person name="Coulson B.S."/>
        </authorList>
    </citation>
    <scope>INTERACTION WITH HUMAN INTEGRIN HETERODIMER ITGA4/ITGB1 (OUTER CAPSID PROTEIN VP5*)</scope>
    <scope>INTERACTION WITH HUMAN INTEGRIN HETERODIMER ITGA4/ITGB7 (OUTER CAPSID PROTEIN VP5*)</scope>
</reference>
<reference key="13">
    <citation type="journal article" date="2006" name="J. Virol.">
        <title>Dissecting rotavirus particle-raft interaction with small interfering RNAs: insights into rotavirus transit through the secretory pathway.</title>
        <authorList>
            <person name="Cuadras M.A."/>
            <person name="Bordier B.B."/>
            <person name="Zambrano J.L."/>
            <person name="Ludert J.E."/>
            <person name="Greenberg H.B."/>
        </authorList>
    </citation>
    <scope>FUNCTION (OUTER CAPSID PROTEIN VP4)</scope>
    <scope>SUBCELLULAR LOCATION (OUTER CAPSID PROTEIN VP4)</scope>
</reference>
<reference key="14">
    <citation type="journal article" date="2006" name="Glycoconj. J.">
        <title>Role of sialic acids in rotavirus infection.</title>
        <authorList>
            <person name="Isa P."/>
            <person name="Arias C.F."/>
            <person name="Lopez S."/>
        </authorList>
    </citation>
    <scope>REVIEW</scope>
</reference>
<reference key="15">
    <citation type="journal article" date="2006" name="J. Gen. Virol.">
        <title>Rotavirus spike protein VP5* binds alpha2beta1 integrin on the cell surface and competes with virus for cell binding and infectivity.</title>
        <authorList>
            <person name="Graham K.L."/>
            <person name="Takada Y."/>
            <person name="Coulson B.S."/>
        </authorList>
    </citation>
    <scope>INTERACTION WITH SIMIAN INTEGRIN HETERODIMER ITGA2/ITGB1 (OUTER CAPSID PROTEIN VP5*)</scope>
</reference>
<reference key="16">
    <citation type="journal article" date="2010" name="J. Virol.">
        <title>Effect of mutations in VP5 hydrophobic loops on rotavirus cell entry.</title>
        <authorList>
            <person name="Kim I.S."/>
            <person name="Trask S.D."/>
            <person name="Babyonyshev M."/>
            <person name="Dormitzer P.R."/>
            <person name="Harrison S.C."/>
        </authorList>
    </citation>
    <scope>FUNCTION (OUTER CAPSID PROTEIN VP5*)</scope>
    <scope>MUTAGENESIS OF LEU-287; LEU-333; VAL-391 AND TRP-394</scope>
    <scope>FUNCTION (OUTER CAPSID PROTEIN VP8*)</scope>
</reference>
<reference key="17">
    <citation type="journal article" date="2014" name="PLoS Pathog.">
        <title>Structural correlates of rotavirus cell entry.</title>
        <authorList>
            <person name="Abdelhakim A.H."/>
            <person name="Salgado E.N."/>
            <person name="Fu X."/>
            <person name="Pasham M."/>
            <person name="Nicastro D."/>
            <person name="Kirchhausen T."/>
            <person name="Harrison S.C."/>
        </authorList>
    </citation>
    <scope>FUNCTION (OUTER CAPSID PROTEIN VP4)</scope>
</reference>
<reference key="18">
    <citation type="journal article" date="2011" name="EMBO J.">
        <title>Atomic model of an infectious rotavirus particle.</title>
        <authorList>
            <person name="Settembre E.C."/>
            <person name="Chen J.Z."/>
            <person name="Dormitzer P.R."/>
            <person name="Grigorieff N."/>
            <person name="Harrison S.C."/>
        </authorList>
    </citation>
    <scope>DOMAIN (OUTER CAPSID PROTEIN VP4)</scope>
    <scope>INTERACTION WITH VP6 (OUTER CAPSID PROTEIN VP4)</scope>
    <scope>INTERACTION WITH VP7 (OUTER CAPSID PROTEIN VP4)</scope>
</reference>
<reference key="19">
    <citation type="journal article" date="2017" name="PLoS Pathog.">
        <title>Structural basis of glycan specificity of P[19] VP8*: Implications for rotavirus zoonosis and evolution.</title>
        <authorList>
            <person name="Liu Y."/>
            <person name="Xu S."/>
            <person name="Woodruff A.L."/>
            <person name="Xia M."/>
            <person name="Tan M."/>
            <person name="Kennedy M.A."/>
            <person name="Jiang X."/>
        </authorList>
    </citation>
    <scope>FUNCTION (OUTER CAPSID PROTEIN VP8*)</scope>
</reference>
<reference key="20">
    <citation type="journal article" date="2017" name="J. Virol.">
        <title>Actin-dependent non-lytic rotavirus exit and infectious virus morphogenetic pathway in non-polarized cells.</title>
        <authorList>
            <person name="Trejo-Cerro O."/>
            <person name="Eichwald C."/>
            <person name="Schraner E.M."/>
            <person name="Silva-Ayala D."/>
            <person name="Lopez S."/>
            <person name="Arias C.F."/>
        </authorList>
    </citation>
    <scope>SUBCELLULAR LOCATION (OUTER CAPSID PROTEIN VP4)</scope>
</reference>
<reference key="21">
    <citation type="journal article" date="2002" name="EMBO J.">
        <title>The rhesus rotavirus VP4 sialic acid binding domain has a galectin fold with a novel carbohydrate binding site.</title>
        <authorList>
            <person name="Dormitzer P.R."/>
            <person name="Sun Z.Y."/>
            <person name="Wagner G."/>
            <person name="Harrison S.C."/>
        </authorList>
    </citation>
    <scope>X-RAY CRYSTALLOGRAPHY (1.4 ANGSTROMS) OF 62-224</scope>
    <scope>STRUCTURE BY NMR OF 46-231</scope>
</reference>
<reference key="22">
    <citation type="journal article" date="2004" name="Nature">
        <title>Structural rearrangements in the membrane penetration protein of a non-enveloped virus.</title>
        <authorList>
            <person name="Dormitzer P.R."/>
            <person name="Nason E.B."/>
            <person name="Prasad B.V.V."/>
            <person name="Harrison S.C."/>
        </authorList>
    </citation>
    <scope>X-RAY CRYSTALLOGRAPHY (3.2 ANGSTROMS) OF 248-525</scope>
    <scope>INTERACTION WITH VP6 (OUTER CAPSID PROTEIN VP4)</scope>
    <scope>INTERACTION WITH VP7 (OUTER CAPSID PROTEIN VP4)</scope>
    <scope>SUBCELLULAR LOCATION (OUTER CAPSID PROTEIN VP5*)</scope>
    <scope>SUBCELLULAR LOCATION (OUTER CAPSID PROTEIN VP8*)</scope>
    <scope>SUBUNIT (OUTER CAPSID PROTEIN VP4)</scope>
</reference>
<reference evidence="24 25" key="23">
    <citation type="journal article" date="2006" name="EMBO J.">
        <title>Alternative intermolecular contacts underlie the rotavirus VP5* two- to three-fold rearrangement.</title>
        <authorList>
            <person name="Yoder J.D."/>
            <person name="Dormitzer P.R."/>
        </authorList>
    </citation>
    <scope>X-RAY CRYSTALLOGRAPHY (1.60 ANGSTROMS) OF 247-479</scope>
    <scope>SUBUNIT (OUTER CAPSID PROTEIN VP5*)</scope>
    <scope>FUNCTION (OUTER CAPSID PROTEIN VP5*)</scope>
    <scope>SUBUNIT (OUTER CAPSID PROTEIN VP4)</scope>
</reference>
<reference evidence="26 27 28" key="24">
    <citation type="journal article" date="2009" name="Glycobiology">
        <title>Effects on sialic acid recognition of amino acid mutations in the carbohydrate-binding cleft of the rotavirus spike protein.</title>
        <authorList>
            <person name="Kraschnefski M.J."/>
            <person name="Bugarcic A."/>
            <person name="Fleming F.E."/>
            <person name="Yu X."/>
            <person name="von Itzstein M."/>
            <person name="Coulson B.S."/>
            <person name="Blanchard H."/>
        </authorList>
    </citation>
    <scope>X-RAY CRYSTALLOGRAPHY (1.56 ANGSTROMS) OF 64-224</scope>
    <scope>MUTAGENESIS OF ARG-101 AND SER-190</scope>
    <scope>SIALIC ACID DEPENDENCY</scope>
</reference>
<reference evidence="29" key="25">
    <citation type="journal article" date="2012" name="J. Virol.">
        <title>Structural basis of rotavirus strain preference toward N-acetyl- or N-glycolylneuraminic acid-containing receptors.</title>
        <authorList>
            <person name="Yu X."/>
            <person name="Dang V.T."/>
            <person name="Fleming F.E."/>
            <person name="von Itzstein M."/>
            <person name="Coulson B.S."/>
            <person name="Blanchard H."/>
        </authorList>
    </citation>
    <scope>X-RAY CRYSTALLOGRAPHY (2.00 ANGSTROMS) OF 64-224</scope>
</reference>
<comment type="function">
    <molecule>Outer capsid protein VP4</molecule>
    <text evidence="10 15 21">Spike-forming protein that mediates virion attachment to the host epithelial cell receptors and plays a major role in cell penetration, determination of host range restriction and virulence (PubMed:25211455). Rotavirus attachment and entry into the host cell probably involves multiple sequential contacts between the outer capsid proteins VP4 and VP7, and the cell receptors (PubMed:15165605). It is subsequently lost, together with VP7, following virus entry into the host cell (PubMed:15165605). Following entry into the host cell, low intracellular or intravesicular Ca(2+) concentration probably causes the calcium-stabilized VP7 trimers to dissociate from the virion (PubMed:25211455). This step is probably necessary for the membrane-disrupting entry step and the release of VP4, which is locked onto the virion by VP7 (PubMed:25211455). During the virus exit from the host cell, VP4 seems to be required to target the newly formed virions to the host cell lipid rafts (PubMed:16571810).</text>
</comment>
<comment type="function">
    <molecule>Outer capsid protein VP5*</molecule>
    <text evidence="1 9 13">Forms the spike 'foot' and 'body' and acts as a membrane permeabilization protein that mediates release of viral particles from endosomal compartments into the cytoplasm. During entry, the part of VP5* that protrudes from the virus folds back on itself and reorganizes from a local dimer to a trimer. This reorganization may be linked to membrane penetration by exposing VP5* hydrophobic region. In integrin-dependent strains, VP5* targets the integrin heterodimer ITGA2/ITGB1 for cell attachment.</text>
</comment>
<comment type="function">
    <molecule>Outer capsid protein VP8*</molecule>
    <text evidence="1 13 16">Forms the head of the spikes and mediates the recognition of specific host cell surface glycans. It is the viral hemagglutinin and an important target of neutralizing antibodies. In sialic acid-dependent strains, VP8* binds to host cell sialic acid, most probably a ganglioside, providing the initial contact (PubMed:20375171). In some other strains, VP8* mediates the attachment to histo-blood group antigens (HBGAs) for viral entry (PubMed:29136651).</text>
</comment>
<comment type="subunit">
    <molecule>Outer capsid protein VP4</molecule>
    <text evidence="7 23">Homotrimer. VP4 adopts a dimeric appearance above the capsid surface, while forming a trimeric base anchored inside the capsid layer. Only hints of the third molecule are observed above the capsid surface. It probably performs a series of molecular rearrangements during viral entry. Prior to trypsin cleavage, it is flexible. The priming trypsin cleavage triggers its rearrangement into rigid spikes with approximate two-fold symmetry of their protruding parts. After an unknown second triggering event, cleaved VP4 may undergo another rearrangement, in which two VP5* subunits fold back on themselves and join a third subunit to form a tightly associated trimer, shaped like a folded umbrella (PubMed:15329727). Interacts with VP6 (PubMed:15329727, PubMed:21157433). Interacts with VP7 (PubMed:15329727, PubMed:21157433).</text>
</comment>
<comment type="subunit">
    <molecule>Outer capsid protein VP5*</molecule>
    <text evidence="3 5 8 9 11 23">Homotrimer. The trimer is coiled-coil stabilized by its C-terminus, however, its N-terminus, known as antigen domain or 'body', seems to be flexible allowing it to self-associate either as a dimer or a trimer (PubMed:16511559). Interacts with host ITGA2 (via ITAG2 I-domain); this interaction occurs when ITGA2 is part of the integrin heterodimer ITGA2/ITGB1 (PubMed:11112480, PubMed:16603530). Interacts with host integrin heterodimer ITGA4/ITGB1 and ITGA4/ITGB7 (PubMed:16298987). Interacts with host HSPA8/HSP70 (PubMed:12805424).</text>
</comment>
<comment type="subcellular location">
    <molecule>Outer capsid protein VP4</molecule>
    <subcellularLocation>
        <location evidence="1 7 17">Virion</location>
    </subcellularLocation>
    <subcellularLocation>
        <location evidence="1">Host rough endoplasmic reticulum</location>
    </subcellularLocation>
    <subcellularLocation>
        <location evidence="1 17">Host cell membrane</location>
    </subcellularLocation>
    <subcellularLocation>
        <location evidence="1">Host cytoplasm</location>
        <location evidence="1">Host cytoskeleton</location>
    </subcellularLocation>
    <subcellularLocation>
        <location evidence="1 10">Host endoplasmic reticulum-Golgi intermediate compartment</location>
    </subcellularLocation>
    <text evidence="1 2 10 17">The outer layer contains 180 copies of VP4, grouped as 60 dimers (By similarity). Immature double-layered particles assembled in the cytoplasm bud across the membrane of the endoplasmic reticulum, acquiring during this process a transient lipid membrane that is modified with the ER resident viral glycoproteins NSP4 and VP7; these enveloped particles also contain VP4. As the particles move towards the interior of the ER cisternae, the transient lipid membrane and the non-structural protein NSP4 are lost, while the virus surface proteins VP4 and VP7 rearrange to form the outermost virus protein layer, yielding mature infectious triple-layered particles. VP4 also seems to associate with lipid rafts of the host cell membrane probably for the exit of the virus from the infected cell by an alternate pathway (PubMed:10708448, PubMed:16571810, PubMed:29263265).</text>
</comment>
<comment type="subcellular location">
    <molecule>Outer capsid protein VP8*</molecule>
    <subcellularLocation>
        <location evidence="1 7 17">Virion</location>
    </subcellularLocation>
    <text evidence="1 7">Outer capsid protein.</text>
</comment>
<comment type="subcellular location">
    <molecule>Outer capsid protein VP5*</molecule>
    <subcellularLocation>
        <location evidence="1 7 17">Virion</location>
    </subcellularLocation>
    <text evidence="1 7">Outer capsid protein.</text>
</comment>
<comment type="domain">
    <molecule>Outer capsid protein VP4</molecule>
    <text evidence="1 14">The VP4 spike is divided into a foot, a stalk and body, and a head.</text>
</comment>
<comment type="PTM">
    <molecule>Outer capsid protein VP4</molecule>
    <text evidence="1 19 20">Proteolytic cleavage by trypsin results in activation of VP4 functions and greatly increases infectivity. The penetration into the host cell is dependent on trypsin treatment of VP4. It produces two peptides, VP5* and VP8* that remain associated with the virion (PubMed:8709201, PubMed:9573313). Cleavage of VP4 by trypsin occurs in vivo in the lumen of the intestine prior to infection of enterocytes (By similarity).</text>
</comment>
<comment type="miscellaneous">
    <text evidence="1">In group A rotaviruses, VP4 defines the P serotype.</text>
</comment>
<comment type="miscellaneous">
    <text evidence="1 6">Some rotavirus strains are neuraminidase-sensitive and require sialic acid to attach to the cell surface. Some rotavirus strains are integrin-dependent. Some rotavirus strains depend on ganglioside for their entry into the host cell. Hsp70 also seems to be involved in the entry of some strains.</text>
</comment>
<comment type="miscellaneous">
    <text evidence="1 4 12 22">This strain probably uses sialic acid to attach to the host cell.</text>
</comment>
<comment type="similarity">
    <text evidence="1">Belongs to the rotavirus VP4 family.</text>
</comment>
<accession>P12473</accession>
<accession>P11201</accession>
<accession>Q86214</accession>
<accession>Q86215</accession>
<accession>Q91HI9</accession>
<feature type="chain" id="PRO_0000041108" description="Outer capsid protein VP4" evidence="1">
    <location>
        <begin position="1"/>
        <end position="776"/>
    </location>
</feature>
<feature type="chain" id="PRO_0000041109" description="Outer capsid protein VP8*" evidence="1">
    <location>
        <begin position="1"/>
        <end position="231"/>
    </location>
</feature>
<feature type="chain" id="PRO_0000041110" description="Outer capsid protein VP5*" evidence="1">
    <location>
        <begin position="248"/>
        <end position="776"/>
    </location>
</feature>
<feature type="region of interest" description="Spike head" evidence="1 14">
    <location>
        <begin position="65"/>
        <end position="224"/>
    </location>
</feature>
<feature type="region of interest" description="Spike body and stalk (antigen domain)" evidence="1 14">
    <location>
        <begin position="248"/>
        <end position="479"/>
    </location>
</feature>
<feature type="region of interest" description="Hydrophobic; possible role in virus entry into host cell" evidence="1 13">
    <location>
        <begin position="389"/>
        <end position="409"/>
    </location>
</feature>
<feature type="region of interest" description="Spike foot" evidence="1 14">
    <location>
        <begin position="510"/>
        <end position="776"/>
    </location>
</feature>
<feature type="coiled-coil region" evidence="1 14">
    <location>
        <begin position="484"/>
        <end position="511"/>
    </location>
</feature>
<feature type="short sequence motif" description="DGE motif; interaction with ITGA2/ITGB1 heterodimer" evidence="1 3">
    <location>
        <begin position="308"/>
        <end position="310"/>
    </location>
</feature>
<feature type="short sequence motif" description="YGL motif; interaction with ITGA4" evidence="1 8">
    <location>
        <begin position="448"/>
        <end position="450"/>
    </location>
</feature>
<feature type="short sequence motif" description="KID motif; interaction with HSPA8" evidence="1 5">
    <location>
        <begin position="644"/>
        <end position="646"/>
    </location>
</feature>
<feature type="site" description="Binding to sialic acid" evidence="1 12">
    <location>
        <position position="101"/>
    </location>
</feature>
<feature type="site" description="Binding to sialic acid" evidence="1 12">
    <location>
        <position position="190"/>
    </location>
</feature>
<feature type="site" description="Cleavage" evidence="1 19">
    <location>
        <begin position="231"/>
        <end position="232"/>
    </location>
</feature>
<feature type="site" description="Cleavage" evidence="1 19">
    <location>
        <begin position="241"/>
        <end position="242"/>
    </location>
</feature>
<feature type="site" description="Cleavage; associated with enhancement of infectivity" evidence="1 19 20">
    <location>
        <begin position="247"/>
        <end position="248"/>
    </location>
</feature>
<feature type="disulfide bond" evidence="1 18">
    <location>
        <begin position="203"/>
        <end position="216"/>
    </location>
</feature>
<feature type="disulfide bond" evidence="1 18">
    <location>
        <begin position="318"/>
        <end position="380"/>
    </location>
</feature>
<feature type="sequence variant" description="In strain: Isolate MMU-18006.">
    <original>EP</original>
    <variation>VA</variation>
    <location>
        <begin position="109"/>
        <end position="110"/>
    </location>
</feature>
<feature type="sequence variant" description="In strain: Isolate MMU-18006.">
    <original>T</original>
    <variation>S</variation>
    <location>
        <position position="146"/>
    </location>
</feature>
<feature type="sequence variant" description="In strain: Isolate MMU-18006.">
    <original>A</original>
    <variation>G</variation>
    <location>
        <position position="166"/>
    </location>
</feature>
<feature type="sequence variant" description="In strain: Isolate MMU-18006.">
    <original>PLALSA</original>
    <variation>LALSAS</variation>
    <location>
        <begin position="235"/>
        <end position="240"/>
    </location>
</feature>
<feature type="sequence variant" description="In strain: Isolate MMU-18006.">
    <original>IS</original>
    <variation>TY</variation>
    <location>
        <begin position="244"/>
        <end position="245"/>
    </location>
</feature>
<feature type="mutagenesis site" description="Reduced ability to bind sialic acid binding." evidence="12">
    <original>R</original>
    <variation>A</variation>
    <location>
        <position position="101"/>
    </location>
</feature>
<feature type="mutagenesis site" description="Reduced ability to bind sialic acid." evidence="12">
    <original>S</original>
    <variation>A</variation>
    <location>
        <position position="190"/>
    </location>
</feature>
<feature type="mutagenesis site" description="Complete loss of trypsin activation of VP4, resulting in a blockage to viral entry." evidence="20">
    <original>R</original>
    <variation>H</variation>
    <location>
        <position position="231"/>
    </location>
</feature>
<feature type="mutagenesis site" description="Complete loss of trypsin activation of VP4, resulting in a blockage to viral entry." evidence="20">
    <original>R</original>
    <variation>H</variation>
    <location>
        <position position="241"/>
    </location>
</feature>
<feature type="mutagenesis site" description="Complete loss of trypsin activation of VP4, resulting in a blockage to viral entry and inhability to induce polykaryon formation. This cleavage is required to promote viral entry." evidence="20">
    <original>R</original>
    <variation>H</variation>
    <location>
        <position position="247"/>
    </location>
</feature>
<feature type="mutagenesis site" description="About 50% loss of association with liposomes." evidence="13">
    <original>L</original>
    <variation>D</variation>
    <location>
        <position position="287"/>
    </location>
</feature>
<feature type="mutagenesis site" description="Slight loss of infectivity. About 50% loss of association with liposomes." evidence="13">
    <original>L</original>
    <variation>D</variation>
    <location>
        <position position="333"/>
    </location>
</feature>
<feature type="mutagenesis site" description="Drastic loss of infectivity by blocking the host membrane permeabilization after virus internalization. Almost complete loss of association with liposomes." evidence="13">
    <original>V</original>
    <variation>D</variation>
    <location>
        <position position="391"/>
    </location>
</feature>
<feature type="mutagenesis site" description="Slight loss of infectivity. No effect on the association with liposomes." evidence="13">
    <original>W</original>
    <variation>Q</variation>
    <location>
        <position position="394"/>
    </location>
</feature>
<feature type="sequence conflict" description="In Ref. 2; AAK52093." evidence="23" ref="2">
    <original>S</original>
    <variation>T</variation>
    <location>
        <position position="73"/>
    </location>
</feature>
<feature type="sequence conflict" description="In Ref. 1; AAA47345." evidence="23" ref="1">
    <original>N</original>
    <variation>Y</variation>
    <location>
        <position position="132"/>
    </location>
</feature>
<feature type="sequence conflict" description="In Ref. 2; AAK52093." evidence="23" ref="2">
    <original>D</original>
    <variation>E</variation>
    <location>
        <position position="311"/>
    </location>
</feature>
<feature type="sequence conflict" description="In Ref. 2; AAK52093." evidence="23" ref="2">
    <original>I</original>
    <variation>V</variation>
    <location>
        <position position="338"/>
    </location>
</feature>
<feature type="sequence conflict" description="In Ref. 2; AAK52093." evidence="23" ref="2">
    <original>F</original>
    <variation>L</variation>
    <location>
        <position position="421"/>
    </location>
</feature>
<feature type="sequence conflict" description="In Ref. 2; AAK52093." evidence="23" ref="2">
    <original>GG</original>
    <variation>SR</variation>
    <location>
        <begin position="445"/>
        <end position="446"/>
    </location>
</feature>
<feature type="sequence conflict" description="In Ref. 2; AAK52093." evidence="23" ref="2">
    <original>Y</original>
    <variation>N</variation>
    <location>
        <position position="454"/>
    </location>
</feature>
<feature type="sequence conflict" description="In Ref. 2; AAK52093." evidence="23" ref="2">
    <original>L</original>
    <variation>F</variation>
    <location>
        <position position="468"/>
    </location>
</feature>
<feature type="sequence conflict" description="In Ref. 2; AAK52093." evidence="23" ref="2">
    <original>Y</original>
    <variation>D</variation>
    <location>
        <position position="519"/>
    </location>
</feature>
<feature type="sequence conflict" description="In Ref. 2; AAK52093." evidence="23" ref="2">
    <original>Y</original>
    <variation>F</variation>
    <location>
        <position position="690"/>
    </location>
</feature>
<feature type="strand" evidence="30">
    <location>
        <begin position="66"/>
        <end position="69"/>
    </location>
</feature>
<feature type="strand" evidence="30">
    <location>
        <begin position="71"/>
        <end position="74"/>
    </location>
</feature>
<feature type="strand" evidence="30">
    <location>
        <begin position="80"/>
        <end position="84"/>
    </location>
</feature>
<feature type="strand" evidence="30">
    <location>
        <begin position="88"/>
        <end position="96"/>
    </location>
</feature>
<feature type="strand" evidence="30">
    <location>
        <begin position="98"/>
        <end position="100"/>
    </location>
</feature>
<feature type="strand" evidence="30">
    <location>
        <begin position="102"/>
        <end position="108"/>
    </location>
</feature>
<feature type="strand" evidence="30">
    <location>
        <begin position="110"/>
        <end position="121"/>
    </location>
</feature>
<feature type="strand" evidence="30">
    <location>
        <begin position="124"/>
        <end position="132"/>
    </location>
</feature>
<feature type="strand" evidence="30">
    <location>
        <begin position="135"/>
        <end position="147"/>
    </location>
</feature>
<feature type="strand" evidence="30">
    <location>
        <begin position="153"/>
        <end position="162"/>
    </location>
</feature>
<feature type="strand" evidence="30">
    <location>
        <begin position="165"/>
        <end position="170"/>
    </location>
</feature>
<feature type="strand" evidence="30">
    <location>
        <begin position="173"/>
        <end position="180"/>
    </location>
</feature>
<feature type="strand" evidence="30">
    <location>
        <begin position="185"/>
        <end position="190"/>
    </location>
</feature>
<feature type="helix" evidence="30">
    <location>
        <begin position="194"/>
        <end position="196"/>
    </location>
</feature>
<feature type="strand" evidence="30">
    <location>
        <begin position="198"/>
        <end position="203"/>
    </location>
</feature>
<feature type="strand" evidence="30">
    <location>
        <begin position="205"/>
        <end position="209"/>
    </location>
</feature>
<feature type="helix" evidence="30">
    <location>
        <begin position="210"/>
        <end position="212"/>
    </location>
</feature>
<feature type="helix" evidence="30">
    <location>
        <begin position="213"/>
        <end position="222"/>
    </location>
</feature>
<feature type="strand" evidence="32">
    <location>
        <begin position="249"/>
        <end position="258"/>
    </location>
</feature>
<feature type="strand" evidence="32">
    <location>
        <begin position="260"/>
        <end position="275"/>
    </location>
</feature>
<feature type="strand" evidence="32">
    <location>
        <begin position="278"/>
        <end position="283"/>
    </location>
</feature>
<feature type="strand" evidence="32">
    <location>
        <begin position="290"/>
        <end position="297"/>
    </location>
</feature>
<feature type="strand" evidence="32">
    <location>
        <begin position="299"/>
        <end position="307"/>
    </location>
</feature>
<feature type="strand" evidence="32">
    <location>
        <begin position="310"/>
        <end position="322"/>
    </location>
</feature>
<feature type="strand" evidence="32">
    <location>
        <begin position="324"/>
        <end position="329"/>
    </location>
</feature>
<feature type="strand" evidence="32">
    <location>
        <begin position="338"/>
        <end position="345"/>
    </location>
</feature>
<feature type="strand" evidence="32">
    <location>
        <begin position="350"/>
        <end position="359"/>
    </location>
</feature>
<feature type="helix" evidence="32">
    <location>
        <begin position="360"/>
        <end position="362"/>
    </location>
</feature>
<feature type="strand" evidence="32">
    <location>
        <begin position="367"/>
        <end position="375"/>
    </location>
</feature>
<feature type="strand" evidence="32">
    <location>
        <begin position="378"/>
        <end position="381"/>
    </location>
</feature>
<feature type="strand" evidence="31">
    <location>
        <begin position="384"/>
        <end position="386"/>
    </location>
</feature>
<feature type="strand" evidence="32">
    <location>
        <begin position="390"/>
        <end position="392"/>
    </location>
</feature>
<feature type="strand" evidence="32">
    <location>
        <begin position="396"/>
        <end position="399"/>
    </location>
</feature>
<feature type="strand" evidence="32">
    <location>
        <begin position="401"/>
        <end position="415"/>
    </location>
</feature>
<feature type="strand" evidence="32">
    <location>
        <begin position="420"/>
        <end position="432"/>
    </location>
</feature>
<feature type="strand" evidence="32">
    <location>
        <begin position="437"/>
        <end position="439"/>
    </location>
</feature>
<feature type="strand" evidence="32">
    <location>
        <begin position="449"/>
        <end position="454"/>
    </location>
</feature>
<feature type="turn" evidence="32">
    <location>
        <begin position="455"/>
        <end position="458"/>
    </location>
</feature>
<feature type="strand" evidence="32">
    <location>
        <begin position="462"/>
        <end position="475"/>
    </location>
</feature>
<feature type="helix" evidence="31">
    <location>
        <begin position="492"/>
        <end position="512"/>
    </location>
</feature>
<feature type="turn" evidence="31">
    <location>
        <begin position="513"/>
        <end position="519"/>
    </location>
</feature>
<organismHost>
    <name type="scientific">Macaca mulatta</name>
    <name type="common">Rhesus macaque</name>
    <dbReference type="NCBI Taxonomy" id="9544"/>
</organismHost>
<protein>
    <recommendedName>
        <fullName evidence="1">Outer capsid protein VP4</fullName>
    </recommendedName>
    <alternativeName>
        <fullName evidence="1">Hemagglutinin</fullName>
    </alternativeName>
    <component>
        <recommendedName>
            <fullName evidence="1">Outer capsid protein VP8*</fullName>
        </recommendedName>
    </component>
    <component>
        <recommendedName>
            <fullName evidence="1">Outer capsid protein VP5*</fullName>
        </recommendedName>
    </component>
</protein>
<sequence length="776" mass="86554">MASLIYRQLLTNSYTVDLSDEIQEIGSTKTQNVTINLGPFAQTGYAPVNWGPGETNDSTTVEPVLDGPYQPTSFNPPVDYWMLLAPTAAGVVVEGTNNTDRWLATILVEPNVTSETRSYTLFGTQEQITIANASQTQWKFIDVVKTTQNGSYSQYGPLQSTPKLYAVMKHNGKIYTYNGETPNVTTKYYSTTNYDSVNMTAFCDFYIIPREEESTCTEYINNGLPPIQNTRNIVPLALSARNIISHRAQANEDIVVSKTSLWKEMQYNRDITIRFKFASSIVKSGGLGYKWSEISFKPANYQYTYTRDGEDVTAHTTCSVNGMNDFNFNGGSLPTDFIISRYEVIKENSYVYVDYWDDSQAFRNMVYVRSLAANLNSVICTGGDYSFALPVGQWPVMTGGAVSLHSAGVTLSTQFTDFVSFNSLRFRFRLTVEEPSFSITRTRVGGLYGLPAAYPNNGKEYYEVAGRLSLISLVPSNDDYQTPITNSVTVRQDLERQLGELREEFNALSQEIAMSQLIYLALLPLDMFSMFSGIKSTIDAAKSMATSVMKKFKKSGLANSVSTLTDSLSDAASSISRGASIRSVGSSASAWTDVSTQITDVSSSVSSISTQTSTISRRLRLKEMATQTEGMNFDDISAAVLKTKIDRSTQISPNTLPDIVTEASEKFIPNRAYRVINNDEVFEAGTDGRYFAYRVETFDEIPFDVQKFADLVTDSPVISAIIDFKTLKNLNDNYGISRQQAFNLLRSDPRVLREFINQDNPIIRNRIEQLIMQCRL</sequence>